<sequence>MPKKALDSRIPTLIKNGCQEKQRSFFVVVGDRARDQVVNLHWLLSQSKVAARPNVLWMYKKDLLGFTSHRKKRENKIKKEIKRGIRDPNSEDPFELFCSITNIRYCYYKESEKILGQTYGMLVLQDFEALTPNLLARTIETVEGGGIVVLLLHKLNSLKQLYTMSMDIHSRYRTEAHSDVTARFNERFILSLGNCENCLVIDDELNVLPISGGKNVKALPPTLEEDNSTQNSIKELQESLGEDHPAGALVGVTKTLDQARAVLTFVESIVEKSLKGTVSLTAGRGRGKSAALGLAIAAAIAHGYSNIFITSPSPENLKTLFEFIFKGFDALNYEEHVDYDIIQSTNPAYHNAIVRVNIFRDHRQTIQYISPEDSNVLGQAELVVIDEAAAIPLPLVRKLIGPYLVFMASTINGYEGTGRSLSLKLLQQLREQSRIYSGSGNNKSDSQSHISGRTLKEISLDEPIRYAMGDRIELWLNKLLCLDAASYVSRMATQGFPHPSECSLYRVSRDTLFSYHPISEAFLQRMMSLYVASHYKNSPNDLQLMSDAPAHQLFVLLPPVDLKNPKLPDPICVIQLALEGSISRESIMNSLSRGQRAGGDLIPWLISQQFQDENFAALGGARIVRIAVSPEHVKMGYGTRAMQLLHEYFEGKFISASEEFKAVKHSLKRIGDEEIENTALQTEKIHVRDAKTMPPLLLKLSELQPEPLHYVGVSYGLTPSLQKFWKREGYCPLYLRQTANDLTGEHTCVMLRVLEGRDSEWLGAFAQNFYRRFLSLLGYQFREFAAITALSVLDACNNGTKYVVNSTSKLTNEEINNVFESYDLKRLESYSNNLLDYHVIVDLLPKLAHLYFSGKFPDSVKLSPVQQSVLLALGLQYKTIDTLEKEFNLPSNQLLAMLVKLSKKIMKCIDEIETKDIEEELGSNKKTESSNSKLPEFTPLQQSLEEELQEGADEAMLALREKQRELINAIDLEKYAIRGNEEDWKAAENQIQKTNGKGARVVSIKGEKRKNNSLDASDKKTKEKPSSKKKFRK</sequence>
<name>NAT10_SCHPO</name>
<reference key="1">
    <citation type="journal article" date="2002" name="Nature">
        <title>The genome sequence of Schizosaccharomyces pombe.</title>
        <authorList>
            <person name="Wood V."/>
            <person name="Gwilliam R."/>
            <person name="Rajandream M.A."/>
            <person name="Lyne M.H."/>
            <person name="Lyne R."/>
            <person name="Stewart A."/>
            <person name="Sgouros J.G."/>
            <person name="Peat N."/>
            <person name="Hayles J."/>
            <person name="Baker S.G."/>
            <person name="Basham D."/>
            <person name="Bowman S."/>
            <person name="Brooks K."/>
            <person name="Brown D."/>
            <person name="Brown S."/>
            <person name="Chillingworth T."/>
            <person name="Churcher C.M."/>
            <person name="Collins M."/>
            <person name="Connor R."/>
            <person name="Cronin A."/>
            <person name="Davis P."/>
            <person name="Feltwell T."/>
            <person name="Fraser A."/>
            <person name="Gentles S."/>
            <person name="Goble A."/>
            <person name="Hamlin N."/>
            <person name="Harris D.E."/>
            <person name="Hidalgo J."/>
            <person name="Hodgson G."/>
            <person name="Holroyd S."/>
            <person name="Hornsby T."/>
            <person name="Howarth S."/>
            <person name="Huckle E.J."/>
            <person name="Hunt S."/>
            <person name="Jagels K."/>
            <person name="James K.D."/>
            <person name="Jones L."/>
            <person name="Jones M."/>
            <person name="Leather S."/>
            <person name="McDonald S."/>
            <person name="McLean J."/>
            <person name="Mooney P."/>
            <person name="Moule S."/>
            <person name="Mungall K.L."/>
            <person name="Murphy L.D."/>
            <person name="Niblett D."/>
            <person name="Odell C."/>
            <person name="Oliver K."/>
            <person name="O'Neil S."/>
            <person name="Pearson D."/>
            <person name="Quail M.A."/>
            <person name="Rabbinowitsch E."/>
            <person name="Rutherford K.M."/>
            <person name="Rutter S."/>
            <person name="Saunders D."/>
            <person name="Seeger K."/>
            <person name="Sharp S."/>
            <person name="Skelton J."/>
            <person name="Simmonds M.N."/>
            <person name="Squares R."/>
            <person name="Squares S."/>
            <person name="Stevens K."/>
            <person name="Taylor K."/>
            <person name="Taylor R.G."/>
            <person name="Tivey A."/>
            <person name="Walsh S.V."/>
            <person name="Warren T."/>
            <person name="Whitehead S."/>
            <person name="Woodward J.R."/>
            <person name="Volckaert G."/>
            <person name="Aert R."/>
            <person name="Robben J."/>
            <person name="Grymonprez B."/>
            <person name="Weltjens I."/>
            <person name="Vanstreels E."/>
            <person name="Rieger M."/>
            <person name="Schaefer M."/>
            <person name="Mueller-Auer S."/>
            <person name="Gabel C."/>
            <person name="Fuchs M."/>
            <person name="Duesterhoeft A."/>
            <person name="Fritzc C."/>
            <person name="Holzer E."/>
            <person name="Moestl D."/>
            <person name="Hilbert H."/>
            <person name="Borzym K."/>
            <person name="Langer I."/>
            <person name="Beck A."/>
            <person name="Lehrach H."/>
            <person name="Reinhardt R."/>
            <person name="Pohl T.M."/>
            <person name="Eger P."/>
            <person name="Zimmermann W."/>
            <person name="Wedler H."/>
            <person name="Wambutt R."/>
            <person name="Purnelle B."/>
            <person name="Goffeau A."/>
            <person name="Cadieu E."/>
            <person name="Dreano S."/>
            <person name="Gloux S."/>
            <person name="Lelaure V."/>
            <person name="Mottier S."/>
            <person name="Galibert F."/>
            <person name="Aves S.J."/>
            <person name="Xiang Z."/>
            <person name="Hunt C."/>
            <person name="Moore K."/>
            <person name="Hurst S.M."/>
            <person name="Lucas M."/>
            <person name="Rochet M."/>
            <person name="Gaillardin C."/>
            <person name="Tallada V.A."/>
            <person name="Garzon A."/>
            <person name="Thode G."/>
            <person name="Daga R.R."/>
            <person name="Cruzado L."/>
            <person name="Jimenez J."/>
            <person name="Sanchez M."/>
            <person name="del Rey F."/>
            <person name="Benito J."/>
            <person name="Dominguez A."/>
            <person name="Revuelta J.L."/>
            <person name="Moreno S."/>
            <person name="Armstrong J."/>
            <person name="Forsburg S.L."/>
            <person name="Cerutti L."/>
            <person name="Lowe T."/>
            <person name="McCombie W.R."/>
            <person name="Paulsen I."/>
            <person name="Potashkin J."/>
            <person name="Shpakovski G.V."/>
            <person name="Ussery D."/>
            <person name="Barrell B.G."/>
            <person name="Nurse P."/>
        </authorList>
    </citation>
    <scope>NUCLEOTIDE SEQUENCE [LARGE SCALE GENOMIC DNA]</scope>
    <source>
        <strain>972 / ATCC 24843</strain>
    </source>
</reference>
<reference key="2">
    <citation type="journal article" date="2006" name="Nat. Biotechnol.">
        <title>ORFeome cloning and global analysis of protein localization in the fission yeast Schizosaccharomyces pombe.</title>
        <authorList>
            <person name="Matsuyama A."/>
            <person name="Arai R."/>
            <person name="Yashiroda Y."/>
            <person name="Shirai A."/>
            <person name="Kamata A."/>
            <person name="Sekido S."/>
            <person name="Kobayashi Y."/>
            <person name="Hashimoto A."/>
            <person name="Hamamoto M."/>
            <person name="Hiraoka Y."/>
            <person name="Horinouchi S."/>
            <person name="Yoshida M."/>
        </authorList>
    </citation>
    <scope>SUBCELLULAR LOCATION [LARGE SCALE ANALYSIS]</scope>
</reference>
<reference key="3">
    <citation type="journal article" date="2014" name="PLoS ONE">
        <title>RNA cytidine acetyltransferase of small-subunit ribosomal RNA: identification of acetylation sites and the responsible acetyltransferase in fission yeast, Schizosaccharomyces pombe.</title>
        <authorList>
            <person name="Taoka M."/>
            <person name="Ishikawa D."/>
            <person name="Nobe Y."/>
            <person name="Ishikawa H."/>
            <person name="Yamauchi Y."/>
            <person name="Terukina G."/>
            <person name="Nakayama H."/>
            <person name="Hirota K."/>
            <person name="Takahashi N."/>
            <person name="Isobe T."/>
        </authorList>
    </citation>
    <scope>FUNCTION</scope>
    <scope>CATALYTIC ACTIVITY</scope>
    <scope>MUTAGENESIS OF GLY-285</scope>
</reference>
<protein>
    <recommendedName>
        <fullName evidence="2 6">RNA cytidine acetyltransferase</fullName>
        <ecNumber evidence="2">2.3.1.-</ecNumber>
    </recommendedName>
    <alternativeName>
        <fullName evidence="2">18S rRNA cytosine acetyltransferase</fullName>
    </alternativeName>
</protein>
<keyword id="KW-0012">Acyltransferase</keyword>
<keyword id="KW-0067">ATP-binding</keyword>
<keyword id="KW-0547">Nucleotide-binding</keyword>
<keyword id="KW-0539">Nucleus</keyword>
<keyword id="KW-1185">Reference proteome</keyword>
<keyword id="KW-0698">rRNA processing</keyword>
<keyword id="KW-0808">Transferase</keyword>
<keyword id="KW-0819">tRNA processing</keyword>
<comment type="function">
    <text evidence="1 2 5">RNA cytidine acetyltransferase with specificity toward both 18S rRNA and tRNAs. Catalyzes the formation of N(4)-acetylcytidine (ac4C) at positions 1297 and 1815 in 18S rRNA. Required for early nucleolar cleavages of precursor rRNA at sites A0, A1 and A2 during 18S rRNA synthesis (PubMed:25402480). Catalyzes the formation of ac4C in serine and leucine tRNAs. Requires the tRNA-binding adapter protein tan1 for full tRNA acetyltransferase activity but not for 18S rRNA acetylation (By similarity).</text>
</comment>
<comment type="catalytic activity">
    <reaction evidence="2 5">
        <text>a cytidine in 18S rRNA + acetyl-CoA + ATP + H2O = an N(4)-acetylcytidine in 18S rRNA + ADP + phosphate + CoA + H(+)</text>
        <dbReference type="Rhea" id="RHEA:51424"/>
        <dbReference type="Rhea" id="RHEA-COMP:13575"/>
        <dbReference type="Rhea" id="RHEA-COMP:13576"/>
        <dbReference type="ChEBI" id="CHEBI:15377"/>
        <dbReference type="ChEBI" id="CHEBI:15378"/>
        <dbReference type="ChEBI" id="CHEBI:30616"/>
        <dbReference type="ChEBI" id="CHEBI:43474"/>
        <dbReference type="ChEBI" id="CHEBI:57287"/>
        <dbReference type="ChEBI" id="CHEBI:57288"/>
        <dbReference type="ChEBI" id="CHEBI:74900"/>
        <dbReference type="ChEBI" id="CHEBI:82748"/>
        <dbReference type="ChEBI" id="CHEBI:456216"/>
    </reaction>
</comment>
<comment type="catalytic activity">
    <reaction evidence="2">
        <text>a cytidine in tRNA + acetyl-CoA + ATP + H2O = an N(4)-acetylcytidine in tRNA + ADP + phosphate + CoA + H(+)</text>
        <dbReference type="Rhea" id="RHEA:53876"/>
        <dbReference type="Rhea" id="RHEA-COMP:13670"/>
        <dbReference type="Rhea" id="RHEA-COMP:13671"/>
        <dbReference type="ChEBI" id="CHEBI:15377"/>
        <dbReference type="ChEBI" id="CHEBI:15378"/>
        <dbReference type="ChEBI" id="CHEBI:30616"/>
        <dbReference type="ChEBI" id="CHEBI:43474"/>
        <dbReference type="ChEBI" id="CHEBI:57287"/>
        <dbReference type="ChEBI" id="CHEBI:57288"/>
        <dbReference type="ChEBI" id="CHEBI:74900"/>
        <dbReference type="ChEBI" id="CHEBI:82748"/>
        <dbReference type="ChEBI" id="CHEBI:456216"/>
    </reaction>
</comment>
<comment type="subunit">
    <text evidence="2">Interacts with tan1.</text>
</comment>
<comment type="subcellular location">
    <subcellularLocation>
        <location evidence="2 4">Nucleus</location>
        <location evidence="2 4">Nucleolus</location>
    </subcellularLocation>
</comment>
<comment type="similarity">
    <text evidence="2">Belongs to the RNA cytidine acetyltransferase family. NAT10 subfamily.</text>
</comment>
<gene>
    <name evidence="2 6" type="primary">nat10</name>
    <name evidence="7" type="ORF">SPAC20G8.09c</name>
</gene>
<dbReference type="EC" id="2.3.1.-" evidence="2"/>
<dbReference type="EMBL" id="CU329670">
    <property type="protein sequence ID" value="CAB08603.1"/>
    <property type="molecule type" value="Genomic_DNA"/>
</dbReference>
<dbReference type="PIR" id="T38131">
    <property type="entry name" value="T38131"/>
</dbReference>
<dbReference type="RefSeq" id="NP_593326.1">
    <property type="nucleotide sequence ID" value="NM_001018757.2"/>
</dbReference>
<dbReference type="SMR" id="P87115"/>
<dbReference type="BioGRID" id="278978">
    <property type="interactions" value="14"/>
</dbReference>
<dbReference type="FunCoup" id="P87115">
    <property type="interactions" value="785"/>
</dbReference>
<dbReference type="STRING" id="284812.P87115"/>
<dbReference type="iPTMnet" id="P87115"/>
<dbReference type="SwissPalm" id="P87115"/>
<dbReference type="PaxDb" id="4896-SPAC20G8.09c.1"/>
<dbReference type="EnsemblFungi" id="SPAC20G8.09c.1">
    <property type="protein sequence ID" value="SPAC20G8.09c.1:pep"/>
    <property type="gene ID" value="SPAC20G8.09c"/>
</dbReference>
<dbReference type="GeneID" id="2542520"/>
<dbReference type="KEGG" id="spo:2542520"/>
<dbReference type="PomBase" id="SPAC20G8.09c">
    <property type="gene designation" value="nat10"/>
</dbReference>
<dbReference type="VEuPathDB" id="FungiDB:SPAC20G8.09c"/>
<dbReference type="eggNOG" id="KOG2036">
    <property type="taxonomic scope" value="Eukaryota"/>
</dbReference>
<dbReference type="HOGENOM" id="CLU_004652_0_0_1"/>
<dbReference type="InParanoid" id="P87115"/>
<dbReference type="OMA" id="HLHYIMS"/>
<dbReference type="PhylomeDB" id="P87115"/>
<dbReference type="PRO" id="PR:P87115"/>
<dbReference type="Proteomes" id="UP000002485">
    <property type="component" value="Chromosome I"/>
</dbReference>
<dbReference type="GO" id="GO:0030686">
    <property type="term" value="C:90S preribosome"/>
    <property type="evidence" value="ECO:0000266"/>
    <property type="project" value="PomBase"/>
</dbReference>
<dbReference type="GO" id="GO:0005730">
    <property type="term" value="C:nucleolus"/>
    <property type="evidence" value="ECO:0007005"/>
    <property type="project" value="PomBase"/>
</dbReference>
<dbReference type="GO" id="GO:0005634">
    <property type="term" value="C:nucleus"/>
    <property type="evidence" value="ECO:0007005"/>
    <property type="project" value="PomBase"/>
</dbReference>
<dbReference type="GO" id="GO:1990883">
    <property type="term" value="F:18S rRNA cytidine N-acetyltransferase activity"/>
    <property type="evidence" value="ECO:0000315"/>
    <property type="project" value="PomBase"/>
</dbReference>
<dbReference type="GO" id="GO:0005524">
    <property type="term" value="F:ATP binding"/>
    <property type="evidence" value="ECO:0000255"/>
    <property type="project" value="PomBase"/>
</dbReference>
<dbReference type="GO" id="GO:0000049">
    <property type="term" value="F:tRNA binding"/>
    <property type="evidence" value="ECO:0000318"/>
    <property type="project" value="GO_Central"/>
</dbReference>
<dbReference type="GO" id="GO:0051392">
    <property type="term" value="F:tRNA N4-acetyltransferase activity"/>
    <property type="evidence" value="ECO:0000318"/>
    <property type="project" value="GO_Central"/>
</dbReference>
<dbReference type="GO" id="GO:1904812">
    <property type="term" value="P:rRNA acetylation involved in maturation of SSU-rRNA"/>
    <property type="evidence" value="ECO:0000315"/>
    <property type="project" value="PomBase"/>
</dbReference>
<dbReference type="GO" id="GO:0051391">
    <property type="term" value="P:tRNA acetylation"/>
    <property type="evidence" value="ECO:0000318"/>
    <property type="project" value="GO_Central"/>
</dbReference>
<dbReference type="GO" id="GO:0002101">
    <property type="term" value="P:tRNA wobble cytosine modification"/>
    <property type="evidence" value="ECO:0000318"/>
    <property type="project" value="GO_Central"/>
</dbReference>
<dbReference type="FunFam" id="3.40.50.11040:FF:000002">
    <property type="entry name" value="RNA cytidine acetyltransferase"/>
    <property type="match status" value="1"/>
</dbReference>
<dbReference type="FunFam" id="3.40.50.300:FF:002218">
    <property type="entry name" value="tRNA(Met) cytidine acetyltransferase TmcA"/>
    <property type="match status" value="1"/>
</dbReference>
<dbReference type="Gene3D" id="3.40.50.11040">
    <property type="match status" value="1"/>
</dbReference>
<dbReference type="Gene3D" id="3.40.630.30">
    <property type="match status" value="1"/>
</dbReference>
<dbReference type="Gene3D" id="3.40.50.300">
    <property type="entry name" value="P-loop containing nucleotide triphosphate hydrolases"/>
    <property type="match status" value="1"/>
</dbReference>
<dbReference type="HAMAP" id="MF_03211">
    <property type="entry name" value="RNA_acetyltr_Nat10"/>
    <property type="match status" value="1"/>
</dbReference>
<dbReference type="InterPro" id="IPR000182">
    <property type="entry name" value="GNAT_dom"/>
</dbReference>
<dbReference type="InterPro" id="IPR033688">
    <property type="entry name" value="NAT10"/>
</dbReference>
<dbReference type="InterPro" id="IPR007807">
    <property type="entry name" value="NAT10/TcmA_helicase"/>
</dbReference>
<dbReference type="InterPro" id="IPR027417">
    <property type="entry name" value="P-loop_NTPase"/>
</dbReference>
<dbReference type="InterPro" id="IPR032672">
    <property type="entry name" value="TmcA/NAT10/Kre33"/>
</dbReference>
<dbReference type="InterPro" id="IPR013562">
    <property type="entry name" value="TmcA_N"/>
</dbReference>
<dbReference type="InterPro" id="IPR027992">
    <property type="entry name" value="tRNA_bind_dom"/>
</dbReference>
<dbReference type="PANTHER" id="PTHR10925">
    <property type="entry name" value="N-ACETYLTRANSFERASE 10"/>
    <property type="match status" value="1"/>
</dbReference>
<dbReference type="PANTHER" id="PTHR10925:SF5">
    <property type="entry name" value="RNA CYTIDINE ACETYLTRANSFERASE"/>
    <property type="match status" value="1"/>
</dbReference>
<dbReference type="Pfam" id="PF13718">
    <property type="entry name" value="GNAT_acetyltr_2"/>
    <property type="match status" value="1"/>
</dbReference>
<dbReference type="Pfam" id="PF05127">
    <property type="entry name" value="NAT10_TcmA_helicase"/>
    <property type="match status" value="1"/>
</dbReference>
<dbReference type="Pfam" id="PF08351">
    <property type="entry name" value="TmcA_N"/>
    <property type="match status" value="1"/>
</dbReference>
<dbReference type="Pfam" id="PF13725">
    <property type="entry name" value="tRNA_bind_2"/>
    <property type="match status" value="1"/>
</dbReference>
<proteinExistence type="evidence at protein level"/>
<feature type="chain" id="PRO_0000215889" description="RNA cytidine acetyltransferase">
    <location>
        <begin position="1"/>
        <end position="1033"/>
    </location>
</feature>
<feature type="domain" description="N-acetyltransferase" evidence="2">
    <location>
        <begin position="560"/>
        <end position="694"/>
    </location>
</feature>
<feature type="region of interest" description="Disordered" evidence="3">
    <location>
        <begin position="988"/>
        <end position="1033"/>
    </location>
</feature>
<feature type="compositionally biased region" description="Basic and acidic residues" evidence="3">
    <location>
        <begin position="1005"/>
        <end position="1026"/>
    </location>
</feature>
<feature type="binding site" evidence="2">
    <location>
        <begin position="285"/>
        <end position="294"/>
    </location>
    <ligand>
        <name>ATP</name>
        <dbReference type="ChEBI" id="CHEBI:30616"/>
    </ligand>
</feature>
<feature type="binding site" evidence="2">
    <location>
        <position position="465"/>
    </location>
    <ligand>
        <name>ATP</name>
        <dbReference type="ChEBI" id="CHEBI:30616"/>
    </ligand>
</feature>
<feature type="binding site" evidence="2">
    <location>
        <begin position="626"/>
        <end position="628"/>
    </location>
    <ligand>
        <name>acetyl-CoA</name>
        <dbReference type="ChEBI" id="CHEBI:57288"/>
    </ligand>
</feature>
<feature type="binding site" evidence="2">
    <location>
        <begin position="633"/>
        <end position="639"/>
    </location>
    <ligand>
        <name>acetyl-CoA</name>
        <dbReference type="ChEBI" id="CHEBI:57288"/>
    </ligand>
</feature>
<feature type="binding site" evidence="2">
    <location>
        <position position="727"/>
    </location>
    <ligand>
        <name>acetyl-CoA</name>
        <dbReference type="ChEBI" id="CHEBI:57288"/>
    </ligand>
</feature>
<feature type="mutagenesis site" description="Completely lacks 18S rRNA acetylation and produces only trace amounts of the 40S small ribosomal subunit." evidence="5">
    <original>G</original>
    <variation>D</variation>
    <location>
        <position position="285"/>
    </location>
</feature>
<accession>P87115</accession>
<evidence type="ECO:0000250" key="1">
    <source>
        <dbReference type="UniProtKB" id="P53914"/>
    </source>
</evidence>
<evidence type="ECO:0000255" key="2">
    <source>
        <dbReference type="HAMAP-Rule" id="MF_03211"/>
    </source>
</evidence>
<evidence type="ECO:0000256" key="3">
    <source>
        <dbReference type="SAM" id="MobiDB-lite"/>
    </source>
</evidence>
<evidence type="ECO:0000269" key="4">
    <source>
    </source>
</evidence>
<evidence type="ECO:0000269" key="5">
    <source>
    </source>
</evidence>
<evidence type="ECO:0000303" key="6">
    <source>
    </source>
</evidence>
<evidence type="ECO:0000312" key="7">
    <source>
        <dbReference type="PomBase" id="SPAC20G8.09c"/>
    </source>
</evidence>
<organism>
    <name type="scientific">Schizosaccharomyces pombe (strain 972 / ATCC 24843)</name>
    <name type="common">Fission yeast</name>
    <dbReference type="NCBI Taxonomy" id="284812"/>
    <lineage>
        <taxon>Eukaryota</taxon>
        <taxon>Fungi</taxon>
        <taxon>Dikarya</taxon>
        <taxon>Ascomycota</taxon>
        <taxon>Taphrinomycotina</taxon>
        <taxon>Schizosaccharomycetes</taxon>
        <taxon>Schizosaccharomycetales</taxon>
        <taxon>Schizosaccharomycetaceae</taxon>
        <taxon>Schizosaccharomyces</taxon>
    </lineage>
</organism>